<feature type="chain" id="PRO_0000330017" description="RNA polymerase II subunit A C-terminal domain phosphatase SSU72">
    <location>
        <begin position="1"/>
        <end position="194"/>
    </location>
</feature>
<feature type="coiled-coil region" evidence="2">
    <location>
        <begin position="160"/>
        <end position="186"/>
    </location>
</feature>
<feature type="sequence conflict" description="In Ref. 1; AAH98966." evidence="3" ref="1">
    <original>F</original>
    <variation>I</variation>
    <location>
        <position position="31"/>
    </location>
</feature>
<feature type="sequence conflict" description="In Ref. 1; AAH98966." evidence="3" ref="1">
    <original>I</original>
    <variation>V</variation>
    <location>
        <position position="91"/>
    </location>
</feature>
<feature type="sequence conflict" description="In Ref. 1; AAH98966." evidence="3" ref="1">
    <original>E</original>
    <variation>D</variation>
    <location>
        <position position="178"/>
    </location>
</feature>
<keyword id="KW-0175">Coiled coil</keyword>
<keyword id="KW-0963">Cytoplasm</keyword>
<keyword id="KW-0378">Hydrolase</keyword>
<keyword id="KW-0507">mRNA processing</keyword>
<keyword id="KW-0539">Nucleus</keyword>
<keyword id="KW-0904">Protein phosphatase</keyword>
<keyword id="KW-1185">Reference proteome</keyword>
<evidence type="ECO:0000250" key="1"/>
<evidence type="ECO:0000255" key="2"/>
<evidence type="ECO:0000305" key="3"/>
<gene>
    <name type="primary">ssu72</name>
</gene>
<proteinExistence type="evidence at transcript level"/>
<name>SSU72_XENLA</name>
<organism>
    <name type="scientific">Xenopus laevis</name>
    <name type="common">African clawed frog</name>
    <dbReference type="NCBI Taxonomy" id="8355"/>
    <lineage>
        <taxon>Eukaryota</taxon>
        <taxon>Metazoa</taxon>
        <taxon>Chordata</taxon>
        <taxon>Craniata</taxon>
        <taxon>Vertebrata</taxon>
        <taxon>Euteleostomi</taxon>
        <taxon>Amphibia</taxon>
        <taxon>Batrachia</taxon>
        <taxon>Anura</taxon>
        <taxon>Pipoidea</taxon>
        <taxon>Pipidae</taxon>
        <taxon>Xenopodinae</taxon>
        <taxon>Xenopus</taxon>
        <taxon>Xenopus</taxon>
    </lineage>
</organism>
<accession>Q6NRQ7</accession>
<accession>Q4KLW8</accession>
<comment type="function">
    <text evidence="1">May be involved in the C-terminal domain of RNA polymerase II dephosphorylation, RNA processing and termination.</text>
</comment>
<comment type="catalytic activity">
    <reaction>
        <text>O-phospho-L-seryl-[protein] + H2O = L-seryl-[protein] + phosphate</text>
        <dbReference type="Rhea" id="RHEA:20629"/>
        <dbReference type="Rhea" id="RHEA-COMP:9863"/>
        <dbReference type="Rhea" id="RHEA-COMP:11604"/>
        <dbReference type="ChEBI" id="CHEBI:15377"/>
        <dbReference type="ChEBI" id="CHEBI:29999"/>
        <dbReference type="ChEBI" id="CHEBI:43474"/>
        <dbReference type="ChEBI" id="CHEBI:83421"/>
        <dbReference type="EC" id="3.1.3.16"/>
    </reaction>
</comment>
<comment type="catalytic activity">
    <reaction>
        <text>O-phospho-L-threonyl-[protein] + H2O = L-threonyl-[protein] + phosphate</text>
        <dbReference type="Rhea" id="RHEA:47004"/>
        <dbReference type="Rhea" id="RHEA-COMP:11060"/>
        <dbReference type="Rhea" id="RHEA-COMP:11605"/>
        <dbReference type="ChEBI" id="CHEBI:15377"/>
        <dbReference type="ChEBI" id="CHEBI:30013"/>
        <dbReference type="ChEBI" id="CHEBI:43474"/>
        <dbReference type="ChEBI" id="CHEBI:61977"/>
        <dbReference type="EC" id="3.1.3.16"/>
    </reaction>
</comment>
<comment type="subcellular location">
    <subcellularLocation>
        <location evidence="1">Nucleus</location>
    </subcellularLocation>
    <subcellularLocation>
        <location evidence="1">Cytoplasm</location>
    </subcellularLocation>
    <text evidence="1">Predominantly in the cytosol.</text>
</comment>
<comment type="similarity">
    <text evidence="3">Belongs to the SSU72 phosphatase family.</text>
</comment>
<reference key="1">
    <citation type="submission" date="2004-05" db="EMBL/GenBank/DDBJ databases">
        <authorList>
            <consortium name="NIH - Xenopus Gene Collection (XGC) project"/>
        </authorList>
    </citation>
    <scope>NUCLEOTIDE SEQUENCE [LARGE SCALE MRNA]</scope>
    <source>
        <tissue>Embryo</tissue>
    </source>
</reference>
<dbReference type="EC" id="3.1.3.16"/>
<dbReference type="EMBL" id="BC070675">
    <property type="protein sequence ID" value="AAH70675.1"/>
    <property type="molecule type" value="mRNA"/>
</dbReference>
<dbReference type="EMBL" id="BC098966">
    <property type="protein sequence ID" value="AAH98966.1"/>
    <property type="molecule type" value="mRNA"/>
</dbReference>
<dbReference type="RefSeq" id="NP_001084864.1">
    <property type="nucleotide sequence ID" value="NM_001091395.1"/>
</dbReference>
<dbReference type="SMR" id="Q6NRQ7"/>
<dbReference type="DNASU" id="431913"/>
<dbReference type="DNASU" id="734628"/>
<dbReference type="GeneID" id="431913"/>
<dbReference type="KEGG" id="xla:431913"/>
<dbReference type="KEGG" id="xla:734628"/>
<dbReference type="AGR" id="Xenbase:XB-GENE-5725684"/>
<dbReference type="CTD" id="431913"/>
<dbReference type="CTD" id="734628"/>
<dbReference type="Xenbase" id="XB-GENE-5725684">
    <property type="gene designation" value="ssu72.L"/>
</dbReference>
<dbReference type="OMA" id="PNCYEFG"/>
<dbReference type="OrthoDB" id="57957at2759"/>
<dbReference type="Proteomes" id="UP000186698">
    <property type="component" value="Chromosome 7L"/>
</dbReference>
<dbReference type="Proteomes" id="UP000186698">
    <property type="component" value="Chromosome 7S"/>
</dbReference>
<dbReference type="Bgee" id="431913">
    <property type="expression patterns" value="Expressed in blastula and 19 other cell types or tissues"/>
</dbReference>
<dbReference type="GO" id="GO:0005737">
    <property type="term" value="C:cytoplasm"/>
    <property type="evidence" value="ECO:0007669"/>
    <property type="project" value="UniProtKB-SubCell"/>
</dbReference>
<dbReference type="GO" id="GO:0005847">
    <property type="term" value="C:mRNA cleavage and polyadenylation specificity factor complex"/>
    <property type="evidence" value="ECO:0000318"/>
    <property type="project" value="GO_Central"/>
</dbReference>
<dbReference type="GO" id="GO:0008420">
    <property type="term" value="F:RNA polymerase II CTD heptapeptide repeat phosphatase activity"/>
    <property type="evidence" value="ECO:0000318"/>
    <property type="project" value="GO_Central"/>
</dbReference>
<dbReference type="GO" id="GO:0006397">
    <property type="term" value="P:mRNA processing"/>
    <property type="evidence" value="ECO:0007669"/>
    <property type="project" value="UniProtKB-KW"/>
</dbReference>
<dbReference type="GO" id="GO:0006369">
    <property type="term" value="P:termination of RNA polymerase II transcription"/>
    <property type="evidence" value="ECO:0000318"/>
    <property type="project" value="GO_Central"/>
</dbReference>
<dbReference type="FunFam" id="3.40.50.2300:FF:000039">
    <property type="entry name" value="RNA polymerase II subunit A C-terminal domain phosphatase"/>
    <property type="match status" value="1"/>
</dbReference>
<dbReference type="FunFam" id="3.40.50.2300:FF:000066">
    <property type="entry name" value="RNA polymerase II subunit A C-terminal domain phosphatase SSU72"/>
    <property type="match status" value="1"/>
</dbReference>
<dbReference type="Gene3D" id="3.40.50.2300">
    <property type="match status" value="2"/>
</dbReference>
<dbReference type="InterPro" id="IPR006811">
    <property type="entry name" value="RNA_pol_II_suA"/>
</dbReference>
<dbReference type="PANTHER" id="PTHR20383">
    <property type="entry name" value="RNA POLYMERASE II SUBUNIT A C-TERMINAL DOMAIN PHOSPHATASE"/>
    <property type="match status" value="1"/>
</dbReference>
<dbReference type="Pfam" id="PF04722">
    <property type="entry name" value="Ssu72"/>
    <property type="match status" value="1"/>
</dbReference>
<protein>
    <recommendedName>
        <fullName>RNA polymerase II subunit A C-terminal domain phosphatase SSU72</fullName>
        <shortName>CTD phosphatase SSU72</shortName>
        <ecNumber>3.1.3.16</ecNumber>
    </recommendedName>
</protein>
<sequence length="194" mass="22681">MPTAPLRVAVVCSSNQNRSMEAHNILSKRSFNVRSFGTGTHVKLPGPAPDKPNVYDFKTTYEQMYSDLLKKDKELYTQNGILHMLDRNRRIKPRPERFQNCKDYFDLVITCEERVYDQVVEELNSREQETCQPVHVINVDIQDNHEEATLGAFLICELCQCIQHTEDMENEIDELLQEFEDKSGRTFLHTICFY</sequence>